<proteinExistence type="inferred from homology"/>
<sequence>MSNIGNVEILQIIDSVAREKGISKEILISTVEQAVQAAGRKKYGNEYDIKAQINRKTGEINLLRILKIVEDVEDYLTQISLEEALIKNPEAKIGDEIYEYLPPIDHARVSAQAAKQVITQRVIEAEREKQYHDFKDRKGEIINGIVKRIEYGDIIVDLSRAEAIIKKDQLIKGENFKPNDRIKAYVQDVRQETKGPQIFLSRVDNQMLVKLFKLEVPEILESIIQIKSVARDPGSKAKIAVFAADSSIDPVGSCVGIRGNRVKAVTNELNGEKIDIVLWSNDLAQFIVNALAPLAPGEITKILIDEDRHKVEVVVSQENQSIAIGRRGQNVRLASQLTGWNIDIMTEEQESKRRNEEFLTSTALFMEALDVEEVIGQLLSVTGFNSVEQIASSEISTLTRIEGFEEELAVEIKNRAINYVDLKNEKIIKKLEDLGVEQELIDILELSLELILQFAEYGIKTIEDLGEMSVNEFKNLAPNSNITDENIKLLIKTARQHGALKDS</sequence>
<name>NUSA_RICCN</name>
<organism>
    <name type="scientific">Rickettsia conorii (strain ATCC VR-613 / Malish 7)</name>
    <dbReference type="NCBI Taxonomy" id="272944"/>
    <lineage>
        <taxon>Bacteria</taxon>
        <taxon>Pseudomonadati</taxon>
        <taxon>Pseudomonadota</taxon>
        <taxon>Alphaproteobacteria</taxon>
        <taxon>Rickettsiales</taxon>
        <taxon>Rickettsiaceae</taxon>
        <taxon>Rickettsieae</taxon>
        <taxon>Rickettsia</taxon>
        <taxon>spotted fever group</taxon>
    </lineage>
</organism>
<comment type="function">
    <text evidence="1">Participates in both transcription termination and antitermination.</text>
</comment>
<comment type="subunit">
    <text evidence="1">Monomer. Binds directly to the core enzyme of the DNA-dependent RNA polymerase and to nascent RNA.</text>
</comment>
<comment type="subcellular location">
    <subcellularLocation>
        <location evidence="1">Cytoplasm</location>
    </subcellularLocation>
</comment>
<comment type="similarity">
    <text evidence="1">Belongs to the NusA family.</text>
</comment>
<gene>
    <name evidence="1" type="primary">nusA</name>
    <name type="ordered locus">RC0817</name>
</gene>
<keyword id="KW-0963">Cytoplasm</keyword>
<keyword id="KW-0694">RNA-binding</keyword>
<keyword id="KW-0804">Transcription</keyword>
<keyword id="KW-0889">Transcription antitermination</keyword>
<keyword id="KW-0805">Transcription regulation</keyword>
<keyword id="KW-0806">Transcription termination</keyword>
<reference key="1">
    <citation type="journal article" date="2001" name="Science">
        <title>Mechanisms of evolution in Rickettsia conorii and R. prowazekii.</title>
        <authorList>
            <person name="Ogata H."/>
            <person name="Audic S."/>
            <person name="Renesto-Audiffren P."/>
            <person name="Fournier P.-E."/>
            <person name="Barbe V."/>
            <person name="Samson D."/>
            <person name="Roux V."/>
            <person name="Cossart P."/>
            <person name="Weissenbach J."/>
            <person name="Claverie J.-M."/>
            <person name="Raoult D."/>
        </authorList>
    </citation>
    <scope>NUCLEOTIDE SEQUENCE [LARGE SCALE GENOMIC DNA]</scope>
    <source>
        <strain>ATCC VR-613 / Malish 7</strain>
    </source>
</reference>
<feature type="chain" id="PRO_0000181976" description="Transcription termination/antitermination protein NusA">
    <location>
        <begin position="1"/>
        <end position="503"/>
    </location>
</feature>
<feature type="domain" description="S1 motif" evidence="1">
    <location>
        <begin position="139"/>
        <end position="203"/>
    </location>
</feature>
<feature type="domain" description="KH" evidence="1">
    <location>
        <begin position="308"/>
        <end position="378"/>
    </location>
</feature>
<protein>
    <recommendedName>
        <fullName evidence="1">Transcription termination/antitermination protein NusA</fullName>
    </recommendedName>
</protein>
<evidence type="ECO:0000255" key="1">
    <source>
        <dbReference type="HAMAP-Rule" id="MF_00945"/>
    </source>
</evidence>
<accession>Q92HF4</accession>
<dbReference type="EMBL" id="AE006914">
    <property type="protein sequence ID" value="AAL03355.1"/>
    <property type="molecule type" value="Genomic_DNA"/>
</dbReference>
<dbReference type="PIR" id="A97802">
    <property type="entry name" value="A97802"/>
</dbReference>
<dbReference type="RefSeq" id="WP_010977426.1">
    <property type="nucleotide sequence ID" value="NC_003103.1"/>
</dbReference>
<dbReference type="SMR" id="Q92HF4"/>
<dbReference type="GeneID" id="927779"/>
<dbReference type="KEGG" id="rco:RC0817"/>
<dbReference type="PATRIC" id="fig|272944.4.peg.928"/>
<dbReference type="HOGENOM" id="CLU_029242_0_0_5"/>
<dbReference type="Proteomes" id="UP000000816">
    <property type="component" value="Chromosome"/>
</dbReference>
<dbReference type="GO" id="GO:0005829">
    <property type="term" value="C:cytosol"/>
    <property type="evidence" value="ECO:0007669"/>
    <property type="project" value="TreeGrafter"/>
</dbReference>
<dbReference type="GO" id="GO:0003700">
    <property type="term" value="F:DNA-binding transcription factor activity"/>
    <property type="evidence" value="ECO:0007669"/>
    <property type="project" value="InterPro"/>
</dbReference>
<dbReference type="GO" id="GO:0000166">
    <property type="term" value="F:nucleotide binding"/>
    <property type="evidence" value="ECO:0007669"/>
    <property type="project" value="InterPro"/>
</dbReference>
<dbReference type="GO" id="GO:0003723">
    <property type="term" value="F:RNA binding"/>
    <property type="evidence" value="ECO:0007669"/>
    <property type="project" value="UniProtKB-UniRule"/>
</dbReference>
<dbReference type="GO" id="GO:0006353">
    <property type="term" value="P:DNA-templated transcription termination"/>
    <property type="evidence" value="ECO:0007669"/>
    <property type="project" value="UniProtKB-UniRule"/>
</dbReference>
<dbReference type="GO" id="GO:0031564">
    <property type="term" value="P:transcription antitermination"/>
    <property type="evidence" value="ECO:0007669"/>
    <property type="project" value="UniProtKB-UniRule"/>
</dbReference>
<dbReference type="CDD" id="cd02134">
    <property type="entry name" value="KH-II_NusA_rpt1"/>
    <property type="match status" value="1"/>
</dbReference>
<dbReference type="CDD" id="cd22529">
    <property type="entry name" value="KH-II_NusA_rpt2"/>
    <property type="match status" value="1"/>
</dbReference>
<dbReference type="CDD" id="cd04455">
    <property type="entry name" value="S1_NusA"/>
    <property type="match status" value="1"/>
</dbReference>
<dbReference type="FunFam" id="2.40.50.140:FF:000058">
    <property type="entry name" value="Transcription termination/antitermination protein NusA"/>
    <property type="match status" value="1"/>
</dbReference>
<dbReference type="FunFam" id="3.30.300.20:FF:000002">
    <property type="entry name" value="Transcription termination/antitermination protein NusA"/>
    <property type="match status" value="1"/>
</dbReference>
<dbReference type="FunFam" id="3.30.300.20:FF:000005">
    <property type="entry name" value="Transcription termination/antitermination protein NusA"/>
    <property type="match status" value="1"/>
</dbReference>
<dbReference type="Gene3D" id="3.30.300.20">
    <property type="match status" value="2"/>
</dbReference>
<dbReference type="Gene3D" id="1.10.150.20">
    <property type="entry name" value="5' to 3' exonuclease, C-terminal subdomain"/>
    <property type="match status" value="2"/>
</dbReference>
<dbReference type="Gene3D" id="2.40.50.140">
    <property type="entry name" value="Nucleic acid-binding proteins"/>
    <property type="match status" value="1"/>
</dbReference>
<dbReference type="Gene3D" id="3.30.1480.10">
    <property type="entry name" value="NusA, N-terminal domain"/>
    <property type="match status" value="1"/>
</dbReference>
<dbReference type="HAMAP" id="MF_00945_B">
    <property type="entry name" value="NusA_B"/>
    <property type="match status" value="1"/>
</dbReference>
<dbReference type="InterPro" id="IPR010995">
    <property type="entry name" value="DNA_repair_Rad51/TF_NusA_a-hlx"/>
</dbReference>
<dbReference type="InterPro" id="IPR004087">
    <property type="entry name" value="KH_dom"/>
</dbReference>
<dbReference type="InterPro" id="IPR015946">
    <property type="entry name" value="KH_dom-like_a/b"/>
</dbReference>
<dbReference type="InterPro" id="IPR025249">
    <property type="entry name" value="KH_dom_NusA-like"/>
</dbReference>
<dbReference type="InterPro" id="IPR009019">
    <property type="entry name" value="KH_sf_prok-type"/>
</dbReference>
<dbReference type="InterPro" id="IPR012340">
    <property type="entry name" value="NA-bd_OB-fold"/>
</dbReference>
<dbReference type="InterPro" id="IPR030842">
    <property type="entry name" value="NusA_bac"/>
</dbReference>
<dbReference type="InterPro" id="IPR036555">
    <property type="entry name" value="NusA_N_sf"/>
</dbReference>
<dbReference type="InterPro" id="IPR003029">
    <property type="entry name" value="S1_domain"/>
</dbReference>
<dbReference type="InterPro" id="IPR013735">
    <property type="entry name" value="TF_NusA_N"/>
</dbReference>
<dbReference type="InterPro" id="IPR010214">
    <property type="entry name" value="Tscrpt_termin_fac_NusA_C_rpt"/>
</dbReference>
<dbReference type="InterPro" id="IPR010213">
    <property type="entry name" value="Tscrpt_termination_fac_NusA"/>
</dbReference>
<dbReference type="NCBIfam" id="TIGR01953">
    <property type="entry name" value="NusA"/>
    <property type="match status" value="1"/>
</dbReference>
<dbReference type="NCBIfam" id="TIGR01954">
    <property type="entry name" value="nusA_Cterm_rpt"/>
    <property type="match status" value="1"/>
</dbReference>
<dbReference type="PANTHER" id="PTHR22648">
    <property type="entry name" value="TRANSCRIPTION TERMINATION FACTOR NUSA"/>
    <property type="match status" value="1"/>
</dbReference>
<dbReference type="PANTHER" id="PTHR22648:SF0">
    <property type="entry name" value="TRANSCRIPTION TERMINATION_ANTITERMINATION PROTEIN NUSA"/>
    <property type="match status" value="1"/>
</dbReference>
<dbReference type="Pfam" id="PF14520">
    <property type="entry name" value="HHH_5"/>
    <property type="match status" value="1"/>
</dbReference>
<dbReference type="Pfam" id="PF13184">
    <property type="entry name" value="KH_5"/>
    <property type="match status" value="1"/>
</dbReference>
<dbReference type="Pfam" id="PF08529">
    <property type="entry name" value="NusA_N"/>
    <property type="match status" value="1"/>
</dbReference>
<dbReference type="Pfam" id="PF00575">
    <property type="entry name" value="S1"/>
    <property type="match status" value="1"/>
</dbReference>
<dbReference type="SMART" id="SM00322">
    <property type="entry name" value="KH"/>
    <property type="match status" value="1"/>
</dbReference>
<dbReference type="SMART" id="SM00316">
    <property type="entry name" value="S1"/>
    <property type="match status" value="1"/>
</dbReference>
<dbReference type="SUPFAM" id="SSF50249">
    <property type="entry name" value="Nucleic acid-binding proteins"/>
    <property type="match status" value="1"/>
</dbReference>
<dbReference type="SUPFAM" id="SSF54814">
    <property type="entry name" value="Prokaryotic type KH domain (KH-domain type II)"/>
    <property type="match status" value="2"/>
</dbReference>
<dbReference type="SUPFAM" id="SSF47794">
    <property type="entry name" value="Rad51 N-terminal domain-like"/>
    <property type="match status" value="2"/>
</dbReference>
<dbReference type="SUPFAM" id="SSF69705">
    <property type="entry name" value="Transcription factor NusA, N-terminal domain"/>
    <property type="match status" value="1"/>
</dbReference>
<dbReference type="PROSITE" id="PS50084">
    <property type="entry name" value="KH_TYPE_1"/>
    <property type="match status" value="1"/>
</dbReference>
<dbReference type="PROSITE" id="PS50126">
    <property type="entry name" value="S1"/>
    <property type="match status" value="1"/>
</dbReference>